<proteinExistence type="inferred from homology"/>
<protein>
    <recommendedName>
        <fullName evidence="1">Holliday junction branch migration complex subunit RuvB</fullName>
        <ecNumber evidence="1">3.6.4.-</ecNumber>
    </recommendedName>
</protein>
<sequence>MEERMITPQQLPGDQEGEVLRPHRLADYIGQTKVKDNLQIFIQAALARGEALDHVLLYGPPGLGKTTLANIIATEMEVNIRTTSGPAIERPGDLAAILTSLEPRDVLFIDEIHRLSRTTEEILYSAMEDGCLDIVIGKGPSARSIRLTLPPFTLVGATTRAGQLASPLRDRFGVISRLEFYEVEDLIRIITRAAGILNLQITLEGASEIARRSRGTPRVANRLLKRVRDYAQVWEDGRVTQELAGKSLDRLEVDPAGLDRIDQKCLLTIIQMFAGGPVGLETLSATIGEEAETIEDVVEPYLLQQGFIQRTPRGRVATVRAYQHLNIPVNSSHQEGGQGDSLFDAAED</sequence>
<evidence type="ECO:0000255" key="1">
    <source>
        <dbReference type="HAMAP-Rule" id="MF_00016"/>
    </source>
</evidence>
<evidence type="ECO:0000256" key="2">
    <source>
        <dbReference type="SAM" id="MobiDB-lite"/>
    </source>
</evidence>
<organism>
    <name type="scientific">Desulfitobacterium hafniense (strain Y51)</name>
    <dbReference type="NCBI Taxonomy" id="138119"/>
    <lineage>
        <taxon>Bacteria</taxon>
        <taxon>Bacillati</taxon>
        <taxon>Bacillota</taxon>
        <taxon>Clostridia</taxon>
        <taxon>Eubacteriales</taxon>
        <taxon>Desulfitobacteriaceae</taxon>
        <taxon>Desulfitobacterium</taxon>
    </lineage>
</organism>
<reference key="1">
    <citation type="journal article" date="2006" name="J. Bacteriol.">
        <title>Complete genome sequence of the dehalorespiring bacterium Desulfitobacterium hafniense Y51 and comparison with Dehalococcoides ethenogenes 195.</title>
        <authorList>
            <person name="Nonaka H."/>
            <person name="Keresztes G."/>
            <person name="Shinoda Y."/>
            <person name="Ikenaga Y."/>
            <person name="Abe M."/>
            <person name="Naito K."/>
            <person name="Inatomi K."/>
            <person name="Furukawa K."/>
            <person name="Inui M."/>
            <person name="Yukawa H."/>
        </authorList>
    </citation>
    <scope>NUCLEOTIDE SEQUENCE [LARGE SCALE GENOMIC DNA]</scope>
    <source>
        <strain>Y51</strain>
    </source>
</reference>
<accession>Q24UN7</accession>
<keyword id="KW-0067">ATP-binding</keyword>
<keyword id="KW-0963">Cytoplasm</keyword>
<keyword id="KW-0227">DNA damage</keyword>
<keyword id="KW-0233">DNA recombination</keyword>
<keyword id="KW-0234">DNA repair</keyword>
<keyword id="KW-0238">DNA-binding</keyword>
<keyword id="KW-0378">Hydrolase</keyword>
<keyword id="KW-0547">Nucleotide-binding</keyword>
<keyword id="KW-1185">Reference proteome</keyword>
<dbReference type="EC" id="3.6.4.-" evidence="1"/>
<dbReference type="EMBL" id="AP008230">
    <property type="protein sequence ID" value="BAE84255.1"/>
    <property type="molecule type" value="Genomic_DNA"/>
</dbReference>
<dbReference type="RefSeq" id="WP_005810736.1">
    <property type="nucleotide sequence ID" value="NC_007907.1"/>
</dbReference>
<dbReference type="SMR" id="Q24UN7"/>
<dbReference type="STRING" id="138119.DSY2466"/>
<dbReference type="KEGG" id="dsy:DSY2466"/>
<dbReference type="eggNOG" id="COG2255">
    <property type="taxonomic scope" value="Bacteria"/>
</dbReference>
<dbReference type="HOGENOM" id="CLU_055599_1_0_9"/>
<dbReference type="Proteomes" id="UP000001946">
    <property type="component" value="Chromosome"/>
</dbReference>
<dbReference type="GO" id="GO:0005737">
    <property type="term" value="C:cytoplasm"/>
    <property type="evidence" value="ECO:0007669"/>
    <property type="project" value="UniProtKB-SubCell"/>
</dbReference>
<dbReference type="GO" id="GO:0048476">
    <property type="term" value="C:Holliday junction resolvase complex"/>
    <property type="evidence" value="ECO:0007669"/>
    <property type="project" value="UniProtKB-UniRule"/>
</dbReference>
<dbReference type="GO" id="GO:0005524">
    <property type="term" value="F:ATP binding"/>
    <property type="evidence" value="ECO:0007669"/>
    <property type="project" value="UniProtKB-UniRule"/>
</dbReference>
<dbReference type="GO" id="GO:0016887">
    <property type="term" value="F:ATP hydrolysis activity"/>
    <property type="evidence" value="ECO:0007669"/>
    <property type="project" value="InterPro"/>
</dbReference>
<dbReference type="GO" id="GO:0000400">
    <property type="term" value="F:four-way junction DNA binding"/>
    <property type="evidence" value="ECO:0007669"/>
    <property type="project" value="UniProtKB-UniRule"/>
</dbReference>
<dbReference type="GO" id="GO:0009378">
    <property type="term" value="F:four-way junction helicase activity"/>
    <property type="evidence" value="ECO:0007669"/>
    <property type="project" value="InterPro"/>
</dbReference>
<dbReference type="GO" id="GO:0006310">
    <property type="term" value="P:DNA recombination"/>
    <property type="evidence" value="ECO:0007669"/>
    <property type="project" value="UniProtKB-UniRule"/>
</dbReference>
<dbReference type="GO" id="GO:0006281">
    <property type="term" value="P:DNA repair"/>
    <property type="evidence" value="ECO:0007669"/>
    <property type="project" value="UniProtKB-UniRule"/>
</dbReference>
<dbReference type="CDD" id="cd00009">
    <property type="entry name" value="AAA"/>
    <property type="match status" value="1"/>
</dbReference>
<dbReference type="Gene3D" id="1.10.8.60">
    <property type="match status" value="1"/>
</dbReference>
<dbReference type="Gene3D" id="3.40.50.300">
    <property type="entry name" value="P-loop containing nucleotide triphosphate hydrolases"/>
    <property type="match status" value="1"/>
</dbReference>
<dbReference type="Gene3D" id="1.10.10.10">
    <property type="entry name" value="Winged helix-like DNA-binding domain superfamily/Winged helix DNA-binding domain"/>
    <property type="match status" value="1"/>
</dbReference>
<dbReference type="HAMAP" id="MF_00016">
    <property type="entry name" value="DNA_HJ_migration_RuvB"/>
    <property type="match status" value="1"/>
</dbReference>
<dbReference type="InterPro" id="IPR003593">
    <property type="entry name" value="AAA+_ATPase"/>
</dbReference>
<dbReference type="InterPro" id="IPR041445">
    <property type="entry name" value="AAA_lid_4"/>
</dbReference>
<dbReference type="InterPro" id="IPR004605">
    <property type="entry name" value="DNA_helicase_Holl-junc_RuvB"/>
</dbReference>
<dbReference type="InterPro" id="IPR027417">
    <property type="entry name" value="P-loop_NTPase"/>
</dbReference>
<dbReference type="InterPro" id="IPR008824">
    <property type="entry name" value="RuvB-like_N"/>
</dbReference>
<dbReference type="InterPro" id="IPR008823">
    <property type="entry name" value="RuvB_C"/>
</dbReference>
<dbReference type="InterPro" id="IPR036388">
    <property type="entry name" value="WH-like_DNA-bd_sf"/>
</dbReference>
<dbReference type="InterPro" id="IPR036390">
    <property type="entry name" value="WH_DNA-bd_sf"/>
</dbReference>
<dbReference type="NCBIfam" id="NF000868">
    <property type="entry name" value="PRK00080.1"/>
    <property type="match status" value="1"/>
</dbReference>
<dbReference type="NCBIfam" id="TIGR00635">
    <property type="entry name" value="ruvB"/>
    <property type="match status" value="1"/>
</dbReference>
<dbReference type="PANTHER" id="PTHR42848">
    <property type="match status" value="1"/>
</dbReference>
<dbReference type="PANTHER" id="PTHR42848:SF1">
    <property type="entry name" value="HOLLIDAY JUNCTION BRANCH MIGRATION COMPLEX SUBUNIT RUVB"/>
    <property type="match status" value="1"/>
</dbReference>
<dbReference type="Pfam" id="PF17864">
    <property type="entry name" value="AAA_lid_4"/>
    <property type="match status" value="1"/>
</dbReference>
<dbReference type="Pfam" id="PF05491">
    <property type="entry name" value="RuvB_C"/>
    <property type="match status" value="1"/>
</dbReference>
<dbReference type="Pfam" id="PF05496">
    <property type="entry name" value="RuvB_N"/>
    <property type="match status" value="1"/>
</dbReference>
<dbReference type="SMART" id="SM00382">
    <property type="entry name" value="AAA"/>
    <property type="match status" value="1"/>
</dbReference>
<dbReference type="SUPFAM" id="SSF52540">
    <property type="entry name" value="P-loop containing nucleoside triphosphate hydrolases"/>
    <property type="match status" value="1"/>
</dbReference>
<dbReference type="SUPFAM" id="SSF46785">
    <property type="entry name" value="Winged helix' DNA-binding domain"/>
    <property type="match status" value="1"/>
</dbReference>
<gene>
    <name evidence="1" type="primary">ruvB</name>
    <name type="ordered locus">DSY2466</name>
</gene>
<comment type="function">
    <text evidence="1">The RuvA-RuvB-RuvC complex processes Holliday junction (HJ) DNA during genetic recombination and DNA repair, while the RuvA-RuvB complex plays an important role in the rescue of blocked DNA replication forks via replication fork reversal (RFR). RuvA specifically binds to HJ cruciform DNA, conferring on it an open structure. The RuvB hexamer acts as an ATP-dependent pump, pulling dsDNA into and through the RuvAB complex. RuvB forms 2 homohexamers on either side of HJ DNA bound by 1 or 2 RuvA tetramers; 4 subunits per hexamer contact DNA at a time. Coordinated motions by a converter formed by DNA-disengaged RuvB subunits stimulates ATP hydrolysis and nucleotide exchange. Immobilization of the converter enables RuvB to convert the ATP-contained energy into a lever motion, pulling 2 nucleotides of DNA out of the RuvA tetramer per ATP hydrolyzed, thus driving DNA branch migration. The RuvB motors rotate together with the DNA substrate, which together with the progressing nucleotide cycle form the mechanistic basis for DNA recombination by continuous HJ branch migration. Branch migration allows RuvC to scan DNA until it finds its consensus sequence, where it cleaves and resolves cruciform DNA.</text>
</comment>
<comment type="catalytic activity">
    <reaction evidence="1">
        <text>ATP + H2O = ADP + phosphate + H(+)</text>
        <dbReference type="Rhea" id="RHEA:13065"/>
        <dbReference type="ChEBI" id="CHEBI:15377"/>
        <dbReference type="ChEBI" id="CHEBI:15378"/>
        <dbReference type="ChEBI" id="CHEBI:30616"/>
        <dbReference type="ChEBI" id="CHEBI:43474"/>
        <dbReference type="ChEBI" id="CHEBI:456216"/>
    </reaction>
</comment>
<comment type="subunit">
    <text evidence="1">Homohexamer. Forms an RuvA(8)-RuvB(12)-Holliday junction (HJ) complex. HJ DNA is sandwiched between 2 RuvA tetramers; dsDNA enters through RuvA and exits via RuvB. An RuvB hexamer assembles on each DNA strand where it exits the tetramer. Each RuvB hexamer is contacted by two RuvA subunits (via domain III) on 2 adjacent RuvB subunits; this complex drives branch migration. In the full resolvosome a probable DNA-RuvA(4)-RuvB(12)-RuvC(2) complex forms which resolves the HJ.</text>
</comment>
<comment type="subcellular location">
    <subcellularLocation>
        <location evidence="1">Cytoplasm</location>
    </subcellularLocation>
</comment>
<comment type="domain">
    <text evidence="1">Has 3 domains, the large (RuvB-L) and small ATPase (RuvB-S) domains and the C-terminal head (RuvB-H) domain. The head domain binds DNA, while the ATPase domains jointly bind ATP, ADP or are empty depending on the state of the subunit in the translocation cycle. During a single DNA translocation step the structure of each domain remains the same, but their relative positions change.</text>
</comment>
<comment type="similarity">
    <text evidence="1">Belongs to the RuvB family.</text>
</comment>
<name>RUVB_DESHY</name>
<feature type="chain" id="PRO_1000001396" description="Holliday junction branch migration complex subunit RuvB">
    <location>
        <begin position="1"/>
        <end position="348"/>
    </location>
</feature>
<feature type="region of interest" description="Large ATPase domain (RuvB-L)" evidence="1">
    <location>
        <begin position="1"/>
        <end position="181"/>
    </location>
</feature>
<feature type="region of interest" description="Small ATPAse domain (RuvB-S)" evidence="1">
    <location>
        <begin position="182"/>
        <end position="252"/>
    </location>
</feature>
<feature type="region of interest" description="Head domain (RuvB-H)" evidence="1">
    <location>
        <begin position="255"/>
        <end position="348"/>
    </location>
</feature>
<feature type="region of interest" description="Disordered" evidence="2">
    <location>
        <begin position="329"/>
        <end position="348"/>
    </location>
</feature>
<feature type="binding site" evidence="1">
    <location>
        <position position="20"/>
    </location>
    <ligand>
        <name>ATP</name>
        <dbReference type="ChEBI" id="CHEBI:30616"/>
    </ligand>
</feature>
<feature type="binding site" evidence="1">
    <location>
        <position position="21"/>
    </location>
    <ligand>
        <name>ATP</name>
        <dbReference type="ChEBI" id="CHEBI:30616"/>
    </ligand>
</feature>
<feature type="binding site" evidence="1">
    <location>
        <position position="62"/>
    </location>
    <ligand>
        <name>ATP</name>
        <dbReference type="ChEBI" id="CHEBI:30616"/>
    </ligand>
</feature>
<feature type="binding site" evidence="1">
    <location>
        <position position="65"/>
    </location>
    <ligand>
        <name>ATP</name>
        <dbReference type="ChEBI" id="CHEBI:30616"/>
    </ligand>
</feature>
<feature type="binding site" evidence="1">
    <location>
        <position position="66"/>
    </location>
    <ligand>
        <name>ATP</name>
        <dbReference type="ChEBI" id="CHEBI:30616"/>
    </ligand>
</feature>
<feature type="binding site" evidence="1">
    <location>
        <position position="66"/>
    </location>
    <ligand>
        <name>Mg(2+)</name>
        <dbReference type="ChEBI" id="CHEBI:18420"/>
    </ligand>
</feature>
<feature type="binding site" evidence="1">
    <location>
        <position position="67"/>
    </location>
    <ligand>
        <name>ATP</name>
        <dbReference type="ChEBI" id="CHEBI:30616"/>
    </ligand>
</feature>
<feature type="binding site" evidence="1">
    <location>
        <position position="171"/>
    </location>
    <ligand>
        <name>ATP</name>
        <dbReference type="ChEBI" id="CHEBI:30616"/>
    </ligand>
</feature>
<feature type="binding site" evidence="1">
    <location>
        <position position="181"/>
    </location>
    <ligand>
        <name>ATP</name>
        <dbReference type="ChEBI" id="CHEBI:30616"/>
    </ligand>
</feature>
<feature type="binding site" evidence="1">
    <location>
        <position position="218"/>
    </location>
    <ligand>
        <name>ATP</name>
        <dbReference type="ChEBI" id="CHEBI:30616"/>
    </ligand>
</feature>
<feature type="binding site" evidence="1">
    <location>
        <position position="310"/>
    </location>
    <ligand>
        <name>DNA</name>
        <dbReference type="ChEBI" id="CHEBI:16991"/>
    </ligand>
</feature>
<feature type="binding site" evidence="1">
    <location>
        <position position="315"/>
    </location>
    <ligand>
        <name>DNA</name>
        <dbReference type="ChEBI" id="CHEBI:16991"/>
    </ligand>
</feature>